<feature type="chain" id="PRO_1000122477" description="Glutamyl-tRNA(Gln) amidotransferase subunit A">
    <location>
        <begin position="1"/>
        <end position="482"/>
    </location>
</feature>
<feature type="active site" description="Charge relay system" evidence="1">
    <location>
        <position position="75"/>
    </location>
</feature>
<feature type="active site" description="Charge relay system" evidence="1">
    <location>
        <position position="150"/>
    </location>
</feature>
<feature type="active site" description="Acyl-ester intermediate" evidence="1">
    <location>
        <position position="174"/>
    </location>
</feature>
<gene>
    <name evidence="1" type="primary">gatA</name>
    <name type="ordered locus">Cyan7425_2535</name>
</gene>
<organism>
    <name type="scientific">Cyanothece sp. (strain PCC 7425 / ATCC 29141)</name>
    <dbReference type="NCBI Taxonomy" id="395961"/>
    <lineage>
        <taxon>Bacteria</taxon>
        <taxon>Bacillati</taxon>
        <taxon>Cyanobacteriota</taxon>
        <taxon>Cyanophyceae</taxon>
        <taxon>Gomontiellales</taxon>
        <taxon>Cyanothecaceae</taxon>
        <taxon>Cyanothece</taxon>
    </lineage>
</organism>
<accession>B8HY89</accession>
<keyword id="KW-0067">ATP-binding</keyword>
<keyword id="KW-0436">Ligase</keyword>
<keyword id="KW-0547">Nucleotide-binding</keyword>
<keyword id="KW-0648">Protein biosynthesis</keyword>
<protein>
    <recommendedName>
        <fullName evidence="1">Glutamyl-tRNA(Gln) amidotransferase subunit A</fullName>
        <shortName evidence="1">Glu-ADT subunit A</shortName>
        <ecNumber evidence="1">6.3.5.7</ecNumber>
    </recommendedName>
</protein>
<sequence>MASIRELHQQLVSKERSAKEITQDALEKIQQLEPKVHAFLTLTAEQALAQAERVDQQIATGTEIGLLAGIPIAIKDNLCTKGIPTTCGSKILQGFIPPYESTVTSRLAAAGAVMVGKTNLDEFAMGSSTENSAYQLTANPWDLQRVPGGSSGGSAAAVAAGETLIALGSDTGGSIRQPASFCGVVGLKPTYGLVSRYGLVAYASSLDQIGPFATNVEDAALLLGAIAGHDPQDSTSLNVPIPDYTQFLIPDLKGKKIGIIQETYGEGLDPQVEQVTHKAIQQLEELGAEVREISCPRFRYGLPTYYIIAPSEASANLARYDGVKYGFRSPDPENLLSMYTRTRAEGFGPEVKRRIMIGTYALSAGYYDAYYLKAQKVRTLIKQDFEAAFEQVDVLVCPTAPTTAFAAGAKTADPLSMYLSDLMTIPVNLAGLPGLSLPCGFDQQGLPIGLQLIGNVLREDLVFQVAYAYEQATPWHDRHPQL</sequence>
<evidence type="ECO:0000255" key="1">
    <source>
        <dbReference type="HAMAP-Rule" id="MF_00120"/>
    </source>
</evidence>
<comment type="function">
    <text evidence="1">Allows the formation of correctly charged Gln-tRNA(Gln) through the transamidation of misacylated Glu-tRNA(Gln) in organisms which lack glutaminyl-tRNA synthetase. The reaction takes place in the presence of glutamine and ATP through an activated gamma-phospho-Glu-tRNA(Gln).</text>
</comment>
<comment type="catalytic activity">
    <reaction evidence="1">
        <text>L-glutamyl-tRNA(Gln) + L-glutamine + ATP + H2O = L-glutaminyl-tRNA(Gln) + L-glutamate + ADP + phosphate + H(+)</text>
        <dbReference type="Rhea" id="RHEA:17521"/>
        <dbReference type="Rhea" id="RHEA-COMP:9681"/>
        <dbReference type="Rhea" id="RHEA-COMP:9684"/>
        <dbReference type="ChEBI" id="CHEBI:15377"/>
        <dbReference type="ChEBI" id="CHEBI:15378"/>
        <dbReference type="ChEBI" id="CHEBI:29985"/>
        <dbReference type="ChEBI" id="CHEBI:30616"/>
        <dbReference type="ChEBI" id="CHEBI:43474"/>
        <dbReference type="ChEBI" id="CHEBI:58359"/>
        <dbReference type="ChEBI" id="CHEBI:78520"/>
        <dbReference type="ChEBI" id="CHEBI:78521"/>
        <dbReference type="ChEBI" id="CHEBI:456216"/>
        <dbReference type="EC" id="6.3.5.7"/>
    </reaction>
</comment>
<comment type="subunit">
    <text evidence="1">Heterotrimer of A, B and C subunits.</text>
</comment>
<comment type="similarity">
    <text evidence="1">Belongs to the amidase family. GatA subfamily.</text>
</comment>
<proteinExistence type="inferred from homology"/>
<dbReference type="EC" id="6.3.5.7" evidence="1"/>
<dbReference type="EMBL" id="CP001344">
    <property type="protein sequence ID" value="ACL44892.1"/>
    <property type="molecule type" value="Genomic_DNA"/>
</dbReference>
<dbReference type="SMR" id="B8HY89"/>
<dbReference type="STRING" id="395961.Cyan7425_2535"/>
<dbReference type="KEGG" id="cyn:Cyan7425_2535"/>
<dbReference type="eggNOG" id="COG0154">
    <property type="taxonomic scope" value="Bacteria"/>
</dbReference>
<dbReference type="HOGENOM" id="CLU_009600_0_3_3"/>
<dbReference type="OrthoDB" id="9811471at2"/>
<dbReference type="GO" id="GO:0030956">
    <property type="term" value="C:glutamyl-tRNA(Gln) amidotransferase complex"/>
    <property type="evidence" value="ECO:0007669"/>
    <property type="project" value="InterPro"/>
</dbReference>
<dbReference type="GO" id="GO:0005524">
    <property type="term" value="F:ATP binding"/>
    <property type="evidence" value="ECO:0007669"/>
    <property type="project" value="UniProtKB-KW"/>
</dbReference>
<dbReference type="GO" id="GO:0050567">
    <property type="term" value="F:glutaminyl-tRNA synthase (glutamine-hydrolyzing) activity"/>
    <property type="evidence" value="ECO:0007669"/>
    <property type="project" value="UniProtKB-UniRule"/>
</dbReference>
<dbReference type="GO" id="GO:0006412">
    <property type="term" value="P:translation"/>
    <property type="evidence" value="ECO:0007669"/>
    <property type="project" value="UniProtKB-UniRule"/>
</dbReference>
<dbReference type="Gene3D" id="3.90.1300.10">
    <property type="entry name" value="Amidase signature (AS) domain"/>
    <property type="match status" value="1"/>
</dbReference>
<dbReference type="HAMAP" id="MF_00120">
    <property type="entry name" value="GatA"/>
    <property type="match status" value="1"/>
</dbReference>
<dbReference type="InterPro" id="IPR000120">
    <property type="entry name" value="Amidase"/>
</dbReference>
<dbReference type="InterPro" id="IPR020556">
    <property type="entry name" value="Amidase_CS"/>
</dbReference>
<dbReference type="InterPro" id="IPR023631">
    <property type="entry name" value="Amidase_dom"/>
</dbReference>
<dbReference type="InterPro" id="IPR036928">
    <property type="entry name" value="AS_sf"/>
</dbReference>
<dbReference type="InterPro" id="IPR004412">
    <property type="entry name" value="GatA"/>
</dbReference>
<dbReference type="NCBIfam" id="TIGR00132">
    <property type="entry name" value="gatA"/>
    <property type="match status" value="1"/>
</dbReference>
<dbReference type="PANTHER" id="PTHR11895:SF151">
    <property type="entry name" value="GLUTAMYL-TRNA(GLN) AMIDOTRANSFERASE SUBUNIT A"/>
    <property type="match status" value="1"/>
</dbReference>
<dbReference type="PANTHER" id="PTHR11895">
    <property type="entry name" value="TRANSAMIDASE"/>
    <property type="match status" value="1"/>
</dbReference>
<dbReference type="Pfam" id="PF01425">
    <property type="entry name" value="Amidase"/>
    <property type="match status" value="1"/>
</dbReference>
<dbReference type="SUPFAM" id="SSF75304">
    <property type="entry name" value="Amidase signature (AS) enzymes"/>
    <property type="match status" value="1"/>
</dbReference>
<dbReference type="PROSITE" id="PS00571">
    <property type="entry name" value="AMIDASES"/>
    <property type="match status" value="1"/>
</dbReference>
<reference key="1">
    <citation type="journal article" date="2011" name="MBio">
        <title>Novel metabolic attributes of the genus Cyanothece, comprising a group of unicellular nitrogen-fixing Cyanobacteria.</title>
        <authorList>
            <person name="Bandyopadhyay A."/>
            <person name="Elvitigala T."/>
            <person name="Welsh E."/>
            <person name="Stockel J."/>
            <person name="Liberton M."/>
            <person name="Min H."/>
            <person name="Sherman L.A."/>
            <person name="Pakrasi H.B."/>
        </authorList>
    </citation>
    <scope>NUCLEOTIDE SEQUENCE [LARGE SCALE GENOMIC DNA]</scope>
    <source>
        <strain>PCC 7425 / ATCC 29141</strain>
    </source>
</reference>
<name>GATA_CYAP4</name>